<protein>
    <recommendedName>
        <fullName>Homeobox-leucine zipper protein HOX12</fullName>
    </recommendedName>
    <alternativeName>
        <fullName>HD-ZIP protein HOX12</fullName>
    </alternativeName>
    <alternativeName>
        <fullName>Homeodomain transcription factor HOX12</fullName>
    </alternativeName>
    <alternativeName>
        <fullName>OsHox12</fullName>
    </alternativeName>
</protein>
<sequence>MSREEDEKLLFPSFAFPAECFPEAATSGGEQKKARQRRRRKVKPEAAAALAGESGGDEQAKKRRLSDEQARFLEMSFKKERKLETPRKVQLAAELGLDAKQVAVWFQNRRARHKSKLMEEEFAKLRSAHDAVVLQNCHLETELLKLKERLADVEEEKAKLAAVAAATTGGGGGGGGGSSSPTSSSFSTVTYHPALAGQFGVEAAAEEADLTYMSEYAYNSYMLELAAAGYCGGVYDQFS</sequence>
<comment type="function">
    <text evidence="1">Probable transcription factor.</text>
</comment>
<comment type="subcellular location">
    <subcellularLocation>
        <location evidence="6">Nucleus</location>
    </subcellularLocation>
</comment>
<comment type="tissue specificity">
    <text evidence="5">Expressed in seedlings, roots, stems, leaf sheaths and panicles.</text>
</comment>
<comment type="similarity">
    <text evidence="6">Belongs to the HD-ZIP homeobox family. Class I subfamily.</text>
</comment>
<evidence type="ECO:0000250" key="1"/>
<evidence type="ECO:0000255" key="2"/>
<evidence type="ECO:0000255" key="3">
    <source>
        <dbReference type="PROSITE-ProRule" id="PRU00108"/>
    </source>
</evidence>
<evidence type="ECO:0000256" key="4">
    <source>
        <dbReference type="SAM" id="MobiDB-lite"/>
    </source>
</evidence>
<evidence type="ECO:0000269" key="5">
    <source>
    </source>
</evidence>
<evidence type="ECO:0000305" key="6"/>
<proteinExistence type="evidence at transcript level"/>
<name>HOX12_ORYSJ</name>
<accession>Q10QF2</accession>
<accession>B7EM63</accession>
<gene>
    <name type="primary">HOX12</name>
    <name type="ordered locus">Os03g0198600</name>
    <name type="ordered locus">LOC_Os03g10210</name>
    <name type="ORF">OsJ_009423</name>
</gene>
<reference key="1">
    <citation type="journal article" date="2005" name="Genome Res.">
        <title>Sequence, annotation, and analysis of synteny between rice chromosome 3 and diverged grass species.</title>
        <authorList>
            <consortium name="The rice chromosome 3 sequencing consortium"/>
            <person name="Buell C.R."/>
            <person name="Yuan Q."/>
            <person name="Ouyang S."/>
            <person name="Liu J."/>
            <person name="Zhu W."/>
            <person name="Wang A."/>
            <person name="Maiti R."/>
            <person name="Haas B."/>
            <person name="Wortman J."/>
            <person name="Pertea M."/>
            <person name="Jones K.M."/>
            <person name="Kim M."/>
            <person name="Overton L."/>
            <person name="Tsitrin T."/>
            <person name="Fadrosh D."/>
            <person name="Bera J."/>
            <person name="Weaver B."/>
            <person name="Jin S."/>
            <person name="Johri S."/>
            <person name="Reardon M."/>
            <person name="Webb K."/>
            <person name="Hill J."/>
            <person name="Moffat K."/>
            <person name="Tallon L."/>
            <person name="Van Aken S."/>
            <person name="Lewis M."/>
            <person name="Utterback T."/>
            <person name="Feldblyum T."/>
            <person name="Zismann V."/>
            <person name="Iobst S."/>
            <person name="Hsiao J."/>
            <person name="de Vazeille A.R."/>
            <person name="Salzberg S.L."/>
            <person name="White O."/>
            <person name="Fraser C.M."/>
            <person name="Yu Y."/>
            <person name="Kim H."/>
            <person name="Rambo T."/>
            <person name="Currie J."/>
            <person name="Collura K."/>
            <person name="Kernodle-Thompson S."/>
            <person name="Wei F."/>
            <person name="Kudrna K."/>
            <person name="Ammiraju J.S.S."/>
            <person name="Luo M."/>
            <person name="Goicoechea J.L."/>
            <person name="Wing R.A."/>
            <person name="Henry D."/>
            <person name="Oates R."/>
            <person name="Palmer M."/>
            <person name="Pries G."/>
            <person name="Saski C."/>
            <person name="Simmons J."/>
            <person name="Soderlund C."/>
            <person name="Nelson W."/>
            <person name="de la Bastide M."/>
            <person name="Spiegel L."/>
            <person name="Nascimento L."/>
            <person name="Huang E."/>
            <person name="Preston R."/>
            <person name="Zutavern T."/>
            <person name="Palmer L."/>
            <person name="O'Shaughnessy A."/>
            <person name="Dike S."/>
            <person name="McCombie W.R."/>
            <person name="Minx P."/>
            <person name="Cordum H."/>
            <person name="Wilson R."/>
            <person name="Jin W."/>
            <person name="Lee H.R."/>
            <person name="Jiang J."/>
            <person name="Jackson S."/>
        </authorList>
    </citation>
    <scope>NUCLEOTIDE SEQUENCE [LARGE SCALE GENOMIC DNA]</scope>
    <source>
        <strain>cv. Nipponbare</strain>
    </source>
</reference>
<reference key="2">
    <citation type="journal article" date="2005" name="Nature">
        <title>The map-based sequence of the rice genome.</title>
        <authorList>
            <consortium name="International rice genome sequencing project (IRGSP)"/>
        </authorList>
    </citation>
    <scope>NUCLEOTIDE SEQUENCE [LARGE SCALE GENOMIC DNA]</scope>
    <source>
        <strain>cv. Nipponbare</strain>
    </source>
</reference>
<reference key="3">
    <citation type="journal article" date="2008" name="Nucleic Acids Res.">
        <title>The rice annotation project database (RAP-DB): 2008 update.</title>
        <authorList>
            <consortium name="The rice annotation project (RAP)"/>
        </authorList>
    </citation>
    <scope>GENOME REANNOTATION</scope>
    <source>
        <strain>cv. Nipponbare</strain>
    </source>
</reference>
<reference key="4">
    <citation type="journal article" date="2013" name="Rice">
        <title>Improvement of the Oryza sativa Nipponbare reference genome using next generation sequence and optical map data.</title>
        <authorList>
            <person name="Kawahara Y."/>
            <person name="de la Bastide M."/>
            <person name="Hamilton J.P."/>
            <person name="Kanamori H."/>
            <person name="McCombie W.R."/>
            <person name="Ouyang S."/>
            <person name="Schwartz D.C."/>
            <person name="Tanaka T."/>
            <person name="Wu J."/>
            <person name="Zhou S."/>
            <person name="Childs K.L."/>
            <person name="Davidson R.M."/>
            <person name="Lin H."/>
            <person name="Quesada-Ocampo L."/>
            <person name="Vaillancourt B."/>
            <person name="Sakai H."/>
            <person name="Lee S.S."/>
            <person name="Kim J."/>
            <person name="Numa H."/>
            <person name="Itoh T."/>
            <person name="Buell C.R."/>
            <person name="Matsumoto T."/>
        </authorList>
    </citation>
    <scope>GENOME REANNOTATION</scope>
    <source>
        <strain>cv. Nipponbare</strain>
    </source>
</reference>
<reference key="5">
    <citation type="journal article" date="2005" name="PLoS Biol.">
        <title>The genomes of Oryza sativa: a history of duplications.</title>
        <authorList>
            <person name="Yu J."/>
            <person name="Wang J."/>
            <person name="Lin W."/>
            <person name="Li S."/>
            <person name="Li H."/>
            <person name="Zhou J."/>
            <person name="Ni P."/>
            <person name="Dong W."/>
            <person name="Hu S."/>
            <person name="Zeng C."/>
            <person name="Zhang J."/>
            <person name="Zhang Y."/>
            <person name="Li R."/>
            <person name="Xu Z."/>
            <person name="Li S."/>
            <person name="Li X."/>
            <person name="Zheng H."/>
            <person name="Cong L."/>
            <person name="Lin L."/>
            <person name="Yin J."/>
            <person name="Geng J."/>
            <person name="Li G."/>
            <person name="Shi J."/>
            <person name="Liu J."/>
            <person name="Lv H."/>
            <person name="Li J."/>
            <person name="Wang J."/>
            <person name="Deng Y."/>
            <person name="Ran L."/>
            <person name="Shi X."/>
            <person name="Wang X."/>
            <person name="Wu Q."/>
            <person name="Li C."/>
            <person name="Ren X."/>
            <person name="Wang J."/>
            <person name="Wang X."/>
            <person name="Li D."/>
            <person name="Liu D."/>
            <person name="Zhang X."/>
            <person name="Ji Z."/>
            <person name="Zhao W."/>
            <person name="Sun Y."/>
            <person name="Zhang Z."/>
            <person name="Bao J."/>
            <person name="Han Y."/>
            <person name="Dong L."/>
            <person name="Ji J."/>
            <person name="Chen P."/>
            <person name="Wu S."/>
            <person name="Liu J."/>
            <person name="Xiao Y."/>
            <person name="Bu D."/>
            <person name="Tan J."/>
            <person name="Yang L."/>
            <person name="Ye C."/>
            <person name="Zhang J."/>
            <person name="Xu J."/>
            <person name="Zhou Y."/>
            <person name="Yu Y."/>
            <person name="Zhang B."/>
            <person name="Zhuang S."/>
            <person name="Wei H."/>
            <person name="Liu B."/>
            <person name="Lei M."/>
            <person name="Yu H."/>
            <person name="Li Y."/>
            <person name="Xu H."/>
            <person name="Wei S."/>
            <person name="He X."/>
            <person name="Fang L."/>
            <person name="Zhang Z."/>
            <person name="Zhang Y."/>
            <person name="Huang X."/>
            <person name="Su Z."/>
            <person name="Tong W."/>
            <person name="Li J."/>
            <person name="Tong Z."/>
            <person name="Li S."/>
            <person name="Ye J."/>
            <person name="Wang L."/>
            <person name="Fang L."/>
            <person name="Lei T."/>
            <person name="Chen C.-S."/>
            <person name="Chen H.-C."/>
            <person name="Xu Z."/>
            <person name="Li H."/>
            <person name="Huang H."/>
            <person name="Zhang F."/>
            <person name="Xu H."/>
            <person name="Li N."/>
            <person name="Zhao C."/>
            <person name="Li S."/>
            <person name="Dong L."/>
            <person name="Huang Y."/>
            <person name="Li L."/>
            <person name="Xi Y."/>
            <person name="Qi Q."/>
            <person name="Li W."/>
            <person name="Zhang B."/>
            <person name="Hu W."/>
            <person name="Zhang Y."/>
            <person name="Tian X."/>
            <person name="Jiao Y."/>
            <person name="Liang X."/>
            <person name="Jin J."/>
            <person name="Gao L."/>
            <person name="Zheng W."/>
            <person name="Hao B."/>
            <person name="Liu S.-M."/>
            <person name="Wang W."/>
            <person name="Yuan L."/>
            <person name="Cao M."/>
            <person name="McDermott J."/>
            <person name="Samudrala R."/>
            <person name="Wang J."/>
            <person name="Wong G.K.-S."/>
            <person name="Yang H."/>
        </authorList>
    </citation>
    <scope>NUCLEOTIDE SEQUENCE [LARGE SCALE GENOMIC DNA]</scope>
    <source>
        <strain>cv. Nipponbare</strain>
    </source>
</reference>
<reference key="6">
    <citation type="journal article" date="2003" name="Science">
        <title>Collection, mapping, and annotation of over 28,000 cDNA clones from japonica rice.</title>
        <authorList>
            <consortium name="The rice full-length cDNA consortium"/>
        </authorList>
    </citation>
    <scope>NUCLEOTIDE SEQUENCE [LARGE SCALE MRNA]</scope>
    <source>
        <strain>cv. Nipponbare</strain>
    </source>
</reference>
<reference key="7">
    <citation type="journal article" date="2008" name="Plant Mol. Biol.">
        <title>A genome-wide survey of HD-Zip genes in rice and analysis of drought-responsive family members.</title>
        <authorList>
            <person name="Agalou A."/>
            <person name="Purwantomo S."/>
            <person name="Oevernaes E."/>
            <person name="Johannesson H."/>
            <person name="Zhu X."/>
            <person name="Estiati A."/>
            <person name="de Kam R.J."/>
            <person name="Engstroem P."/>
            <person name="Slamet-Loedin I.H."/>
            <person name="Zhu Z."/>
            <person name="Wang M."/>
            <person name="Xiong L."/>
            <person name="Meijer A.H."/>
            <person name="Ouwerkerk P.B.F."/>
        </authorList>
    </citation>
    <scope>TISSUE SPECIFICITY</scope>
    <scope>GENE FAMILY</scope>
    <scope>NOMENCLATURE</scope>
</reference>
<organism>
    <name type="scientific">Oryza sativa subsp. japonica</name>
    <name type="common">Rice</name>
    <dbReference type="NCBI Taxonomy" id="39947"/>
    <lineage>
        <taxon>Eukaryota</taxon>
        <taxon>Viridiplantae</taxon>
        <taxon>Streptophyta</taxon>
        <taxon>Embryophyta</taxon>
        <taxon>Tracheophyta</taxon>
        <taxon>Spermatophyta</taxon>
        <taxon>Magnoliopsida</taxon>
        <taxon>Liliopsida</taxon>
        <taxon>Poales</taxon>
        <taxon>Poaceae</taxon>
        <taxon>BOP clade</taxon>
        <taxon>Oryzoideae</taxon>
        <taxon>Oryzeae</taxon>
        <taxon>Oryzinae</taxon>
        <taxon>Oryza</taxon>
        <taxon>Oryza sativa</taxon>
    </lineage>
</organism>
<dbReference type="EMBL" id="DP000009">
    <property type="protein sequence ID" value="ABF94477.1"/>
    <property type="molecule type" value="Genomic_DNA"/>
</dbReference>
<dbReference type="EMBL" id="AP008209">
    <property type="protein sequence ID" value="BAF11194.1"/>
    <property type="molecule type" value="Genomic_DNA"/>
</dbReference>
<dbReference type="EMBL" id="AP014959">
    <property type="protein sequence ID" value="BAS82795.1"/>
    <property type="molecule type" value="Genomic_DNA"/>
</dbReference>
<dbReference type="EMBL" id="CM000140">
    <property type="protein sequence ID" value="EAZ25940.1"/>
    <property type="molecule type" value="Genomic_DNA"/>
</dbReference>
<dbReference type="EMBL" id="AK073446">
    <property type="protein sequence ID" value="BAG93460.1"/>
    <property type="molecule type" value="mRNA"/>
</dbReference>
<dbReference type="RefSeq" id="XP_015629042.1">
    <property type="nucleotide sequence ID" value="XM_015773556.1"/>
</dbReference>
<dbReference type="SMR" id="Q10QF2"/>
<dbReference type="FunCoup" id="Q10QF2">
    <property type="interactions" value="35"/>
</dbReference>
<dbReference type="PaxDb" id="39947-Q10QF2"/>
<dbReference type="EnsemblPlants" id="Os03t0198600-01">
    <property type="protein sequence ID" value="Os03t0198600-01"/>
    <property type="gene ID" value="Os03g0198600"/>
</dbReference>
<dbReference type="Gramene" id="Os03t0198600-01">
    <property type="protein sequence ID" value="Os03t0198600-01"/>
    <property type="gene ID" value="Os03g0198600"/>
</dbReference>
<dbReference type="KEGG" id="dosa:Os03g0198600"/>
<dbReference type="eggNOG" id="KOG0483">
    <property type="taxonomic scope" value="Eukaryota"/>
</dbReference>
<dbReference type="HOGENOM" id="CLU_100008_0_0_1"/>
<dbReference type="InParanoid" id="Q10QF2"/>
<dbReference type="OMA" id="CKRMEVE"/>
<dbReference type="OrthoDB" id="6159439at2759"/>
<dbReference type="PlantReactome" id="R-OSA-9826782">
    <property type="pathway name" value="Regulation of seed germination and coleoptile growth under submergence and normal gravity environment"/>
</dbReference>
<dbReference type="Proteomes" id="UP000000763">
    <property type="component" value="Chromosome 3"/>
</dbReference>
<dbReference type="Proteomes" id="UP000007752">
    <property type="component" value="Chromosome 3"/>
</dbReference>
<dbReference type="Proteomes" id="UP000059680">
    <property type="component" value="Chromosome 3"/>
</dbReference>
<dbReference type="GO" id="GO:0005634">
    <property type="term" value="C:nucleus"/>
    <property type="evidence" value="ECO:0000318"/>
    <property type="project" value="GO_Central"/>
</dbReference>
<dbReference type="GO" id="GO:0000981">
    <property type="term" value="F:DNA-binding transcription factor activity, RNA polymerase II-specific"/>
    <property type="evidence" value="ECO:0007669"/>
    <property type="project" value="InterPro"/>
</dbReference>
<dbReference type="GO" id="GO:0043565">
    <property type="term" value="F:sequence-specific DNA binding"/>
    <property type="evidence" value="ECO:0000318"/>
    <property type="project" value="GO_Central"/>
</dbReference>
<dbReference type="GO" id="GO:0045893">
    <property type="term" value="P:positive regulation of DNA-templated transcription"/>
    <property type="evidence" value="ECO:0000318"/>
    <property type="project" value="GO_Central"/>
</dbReference>
<dbReference type="CDD" id="cd00086">
    <property type="entry name" value="homeodomain"/>
    <property type="match status" value="1"/>
</dbReference>
<dbReference type="FunFam" id="1.10.10.60:FF:000241">
    <property type="entry name" value="homeobox-leucine zipper protein ATHB-40"/>
    <property type="match status" value="1"/>
</dbReference>
<dbReference type="Gene3D" id="1.10.10.60">
    <property type="entry name" value="Homeodomain-like"/>
    <property type="match status" value="1"/>
</dbReference>
<dbReference type="InterPro" id="IPR001356">
    <property type="entry name" value="HD"/>
</dbReference>
<dbReference type="InterPro" id="IPR045224">
    <property type="entry name" value="HDZip_class_I_plant"/>
</dbReference>
<dbReference type="InterPro" id="IPR017970">
    <property type="entry name" value="Homeobox_CS"/>
</dbReference>
<dbReference type="InterPro" id="IPR009057">
    <property type="entry name" value="Homeodomain-like_sf"/>
</dbReference>
<dbReference type="InterPro" id="IPR000047">
    <property type="entry name" value="HTH_motif"/>
</dbReference>
<dbReference type="PANTHER" id="PTHR24326">
    <property type="entry name" value="HOMEOBOX-LEUCINE ZIPPER PROTEIN"/>
    <property type="match status" value="1"/>
</dbReference>
<dbReference type="PANTHER" id="PTHR24326:SF545">
    <property type="entry name" value="HOMEOBOX-LEUCINE ZIPPER PROTEIN HOX12"/>
    <property type="match status" value="1"/>
</dbReference>
<dbReference type="Pfam" id="PF00046">
    <property type="entry name" value="Homeodomain"/>
    <property type="match status" value="1"/>
</dbReference>
<dbReference type="PRINTS" id="PR00031">
    <property type="entry name" value="HTHREPRESSR"/>
</dbReference>
<dbReference type="SMART" id="SM00389">
    <property type="entry name" value="HOX"/>
    <property type="match status" value="1"/>
</dbReference>
<dbReference type="SUPFAM" id="SSF46689">
    <property type="entry name" value="Homeodomain-like"/>
    <property type="match status" value="1"/>
</dbReference>
<dbReference type="PROSITE" id="PS00027">
    <property type="entry name" value="HOMEOBOX_1"/>
    <property type="match status" value="1"/>
</dbReference>
<dbReference type="PROSITE" id="PS50071">
    <property type="entry name" value="HOMEOBOX_2"/>
    <property type="match status" value="1"/>
</dbReference>
<feature type="chain" id="PRO_0000331697" description="Homeobox-leucine zipper protein HOX12">
    <location>
        <begin position="1"/>
        <end position="239"/>
    </location>
</feature>
<feature type="DNA-binding region" description="Homeobox" evidence="3">
    <location>
        <begin position="58"/>
        <end position="117"/>
    </location>
</feature>
<feature type="region of interest" description="Disordered" evidence="4">
    <location>
        <begin position="25"/>
        <end position="65"/>
    </location>
</feature>
<feature type="coiled-coil region" evidence="2">
    <location>
        <begin position="107"/>
        <end position="168"/>
    </location>
</feature>
<keyword id="KW-0175">Coiled coil</keyword>
<keyword id="KW-0238">DNA-binding</keyword>
<keyword id="KW-0371">Homeobox</keyword>
<keyword id="KW-0539">Nucleus</keyword>
<keyword id="KW-1185">Reference proteome</keyword>
<keyword id="KW-0804">Transcription</keyword>
<keyword id="KW-0805">Transcription regulation</keyword>